<organism>
    <name type="scientific">Pongo abelii</name>
    <name type="common">Sumatran orangutan</name>
    <name type="synonym">Pongo pygmaeus abelii</name>
    <dbReference type="NCBI Taxonomy" id="9601"/>
    <lineage>
        <taxon>Eukaryota</taxon>
        <taxon>Metazoa</taxon>
        <taxon>Chordata</taxon>
        <taxon>Craniata</taxon>
        <taxon>Vertebrata</taxon>
        <taxon>Euteleostomi</taxon>
        <taxon>Mammalia</taxon>
        <taxon>Eutheria</taxon>
        <taxon>Euarchontoglires</taxon>
        <taxon>Primates</taxon>
        <taxon>Haplorrhini</taxon>
        <taxon>Catarrhini</taxon>
        <taxon>Hominidae</taxon>
        <taxon>Pongo</taxon>
    </lineage>
</organism>
<sequence>MALKGQEDYIYLFKDSTHPVDFLDAFRTFYLDGLFTDITLQCPSGIIFHCHRAVLAACSNYFKAMFTADMKEKFKNKIKLSGIHHDILEGLVNYAYTSQIEITERNVQSLLEAADLLQFLSVKKACERFLVRHLDIDNCIGMHSFAEFHVCPELEKESRRILCSKFKEVWQQEEFLEISLEKFLFILSRKNLSVWKEEAIIEPVIKWTAHDVENRIECLCNLLSYINIDVDPVYLKTALGLQRSCLFTENKIRSLIYNALNPMHKEISQRSTATMYIIGGYYWHPLSEVHIWDPLTNVWIQGAEIPDYTRESYGVTCLGPNIYVTGGYRTDNIEALDTVWIYNSESDEWTEGLPTLNARYYHCAVTLGGCVYALGGYRKGAPAEEAEFYDPLKEKWIPIANMIKGVGNATACVLHDVIYVIGGHCGYRGSCTYDKVQSYNSDINEWSLITSSPHPEYGLCSVPLENKLYLVGGQTTITECYDPEQNEWREIAPMMERRMECGAVIMNGCIYVTGGYPYSKGTYLQSIEKYDPDLNKWEIVGNLPSAMRSHGCVCVYNV</sequence>
<protein>
    <recommendedName>
        <fullName>Kelch-like protein 23</fullName>
    </recommendedName>
</protein>
<name>KLH23_PONAB</name>
<gene>
    <name type="primary">KLHL23</name>
</gene>
<accession>Q5RCQ9</accession>
<feature type="chain" id="PRO_0000242159" description="Kelch-like protein 23">
    <location>
        <begin position="1"/>
        <end position="558"/>
    </location>
</feature>
<feature type="domain" description="BTB" evidence="1">
    <location>
        <begin position="36"/>
        <end position="104"/>
    </location>
</feature>
<feature type="domain" description="BACK">
    <location>
        <begin position="139"/>
        <end position="240"/>
    </location>
</feature>
<feature type="repeat" description="Kelch 1">
    <location>
        <begin position="274"/>
        <end position="320"/>
    </location>
</feature>
<feature type="repeat" description="Kelch 2">
    <location>
        <begin position="321"/>
        <end position="369"/>
    </location>
</feature>
<feature type="repeat" description="Kelch 3">
    <location>
        <begin position="370"/>
        <end position="416"/>
    </location>
</feature>
<feature type="repeat" description="Kelch 4">
    <location>
        <begin position="418"/>
        <end position="466"/>
    </location>
</feature>
<feature type="repeat" description="Kelch 5">
    <location>
        <begin position="467"/>
        <end position="508"/>
    </location>
</feature>
<feature type="repeat" description="Kelch 6">
    <location>
        <begin position="510"/>
        <end position="557"/>
    </location>
</feature>
<keyword id="KW-0880">Kelch repeat</keyword>
<keyword id="KW-1185">Reference proteome</keyword>
<keyword id="KW-0677">Repeat</keyword>
<reference key="1">
    <citation type="submission" date="2004-11" db="EMBL/GenBank/DDBJ databases">
        <authorList>
            <consortium name="The German cDNA consortium"/>
        </authorList>
    </citation>
    <scope>NUCLEOTIDE SEQUENCE [LARGE SCALE MRNA]</scope>
    <source>
        <tissue>Brain cortex</tissue>
    </source>
</reference>
<proteinExistence type="evidence at transcript level"/>
<evidence type="ECO:0000255" key="1">
    <source>
        <dbReference type="PROSITE-ProRule" id="PRU00037"/>
    </source>
</evidence>
<dbReference type="EMBL" id="CR858210">
    <property type="protein sequence ID" value="CAH90448.1"/>
    <property type="molecule type" value="mRNA"/>
</dbReference>
<dbReference type="RefSeq" id="NP_001125228.1">
    <property type="nucleotide sequence ID" value="NM_001131756.1"/>
</dbReference>
<dbReference type="SMR" id="Q5RCQ9"/>
<dbReference type="FunCoup" id="Q5RCQ9">
    <property type="interactions" value="321"/>
</dbReference>
<dbReference type="STRING" id="9601.ENSPPYP00000014417"/>
<dbReference type="GeneID" id="100172121"/>
<dbReference type="KEGG" id="pon:100172121"/>
<dbReference type="CTD" id="151230"/>
<dbReference type="eggNOG" id="KOG4441">
    <property type="taxonomic scope" value="Eukaryota"/>
</dbReference>
<dbReference type="InParanoid" id="Q5RCQ9"/>
<dbReference type="OrthoDB" id="7956040at2759"/>
<dbReference type="Proteomes" id="UP000001595">
    <property type="component" value="Unplaced"/>
</dbReference>
<dbReference type="CDD" id="cd18462">
    <property type="entry name" value="BACK_KLHL23"/>
    <property type="match status" value="1"/>
</dbReference>
<dbReference type="CDD" id="cd18252">
    <property type="entry name" value="BTB_POZ_KLHL23"/>
    <property type="match status" value="1"/>
</dbReference>
<dbReference type="Gene3D" id="1.25.40.420">
    <property type="match status" value="1"/>
</dbReference>
<dbReference type="Gene3D" id="2.120.10.80">
    <property type="entry name" value="Kelch-type beta propeller"/>
    <property type="match status" value="2"/>
</dbReference>
<dbReference type="Gene3D" id="3.30.710.10">
    <property type="entry name" value="Potassium Channel Kv1.1, Chain A"/>
    <property type="match status" value="1"/>
</dbReference>
<dbReference type="InterPro" id="IPR011705">
    <property type="entry name" value="BACK"/>
</dbReference>
<dbReference type="InterPro" id="IPR017096">
    <property type="entry name" value="BTB-kelch_protein"/>
</dbReference>
<dbReference type="InterPro" id="IPR000210">
    <property type="entry name" value="BTB/POZ_dom"/>
</dbReference>
<dbReference type="InterPro" id="IPR030566">
    <property type="entry name" value="BTB_POZ_KLHL23"/>
</dbReference>
<dbReference type="InterPro" id="IPR015915">
    <property type="entry name" value="Kelch-typ_b-propeller"/>
</dbReference>
<dbReference type="InterPro" id="IPR006652">
    <property type="entry name" value="Kelch_1"/>
</dbReference>
<dbReference type="InterPro" id="IPR047068">
    <property type="entry name" value="KLHL23_BACK"/>
</dbReference>
<dbReference type="InterPro" id="IPR011333">
    <property type="entry name" value="SKP1/BTB/POZ_sf"/>
</dbReference>
<dbReference type="PANTHER" id="PTHR24412">
    <property type="entry name" value="KELCH PROTEIN"/>
    <property type="match status" value="1"/>
</dbReference>
<dbReference type="PANTHER" id="PTHR24412:SF489">
    <property type="entry name" value="RING FINGER DOMAIN AND KELCH REPEAT-CONTAINING PROTEIN DDB_G0271372"/>
    <property type="match status" value="1"/>
</dbReference>
<dbReference type="Pfam" id="PF07707">
    <property type="entry name" value="BACK"/>
    <property type="match status" value="1"/>
</dbReference>
<dbReference type="Pfam" id="PF00651">
    <property type="entry name" value="BTB"/>
    <property type="match status" value="1"/>
</dbReference>
<dbReference type="Pfam" id="PF01344">
    <property type="entry name" value="Kelch_1"/>
    <property type="match status" value="1"/>
</dbReference>
<dbReference type="Pfam" id="PF24681">
    <property type="entry name" value="Kelch_KLHDC2_KLHL20_DRC7"/>
    <property type="match status" value="1"/>
</dbReference>
<dbReference type="PIRSF" id="PIRSF037037">
    <property type="entry name" value="Kelch-like_protein_gigaxonin"/>
    <property type="match status" value="1"/>
</dbReference>
<dbReference type="SMART" id="SM00875">
    <property type="entry name" value="BACK"/>
    <property type="match status" value="1"/>
</dbReference>
<dbReference type="SMART" id="SM00225">
    <property type="entry name" value="BTB"/>
    <property type="match status" value="1"/>
</dbReference>
<dbReference type="SMART" id="SM00612">
    <property type="entry name" value="Kelch"/>
    <property type="match status" value="6"/>
</dbReference>
<dbReference type="SUPFAM" id="SSF117281">
    <property type="entry name" value="Kelch motif"/>
    <property type="match status" value="1"/>
</dbReference>
<dbReference type="SUPFAM" id="SSF54695">
    <property type="entry name" value="POZ domain"/>
    <property type="match status" value="1"/>
</dbReference>
<dbReference type="PROSITE" id="PS50097">
    <property type="entry name" value="BTB"/>
    <property type="match status" value="1"/>
</dbReference>